<reference key="1">
    <citation type="journal article" date="2000" name="Nature">
        <title>DNA sequence of both chromosomes of the cholera pathogen Vibrio cholerae.</title>
        <authorList>
            <person name="Heidelberg J.F."/>
            <person name="Eisen J.A."/>
            <person name="Nelson W.C."/>
            <person name="Clayton R.A."/>
            <person name="Gwinn M.L."/>
            <person name="Dodson R.J."/>
            <person name="Haft D.H."/>
            <person name="Hickey E.K."/>
            <person name="Peterson J.D."/>
            <person name="Umayam L.A."/>
            <person name="Gill S.R."/>
            <person name="Nelson K.E."/>
            <person name="Read T.D."/>
            <person name="Tettelin H."/>
            <person name="Richardson D.L."/>
            <person name="Ermolaeva M.D."/>
            <person name="Vamathevan J.J."/>
            <person name="Bass S."/>
            <person name="Qin H."/>
            <person name="Dragoi I."/>
            <person name="Sellers P."/>
            <person name="McDonald L.A."/>
            <person name="Utterback T.R."/>
            <person name="Fleischmann R.D."/>
            <person name="Nierman W.C."/>
            <person name="White O."/>
            <person name="Salzberg S.L."/>
            <person name="Smith H.O."/>
            <person name="Colwell R.R."/>
            <person name="Mekalanos J.J."/>
            <person name="Venter J.C."/>
            <person name="Fraser C.M."/>
        </authorList>
    </citation>
    <scope>NUCLEOTIDE SEQUENCE [LARGE SCALE GENOMIC DNA]</scope>
    <source>
        <strain>ATCC 39315 / El Tor Inaba N16961</strain>
    </source>
</reference>
<reference key="2">
    <citation type="journal article" date="2005" name="J. Bacteriol.">
        <title>NspS, a predicted polyamine sensor, mediates activation of Vibrio cholerae biofilm formation by norspermidine.</title>
        <authorList>
            <person name="Karatan E."/>
            <person name="Duncan T.R."/>
            <person name="Watnick P.I."/>
        </authorList>
    </citation>
    <scope>FUNCTION</scope>
    <scope>DISRUPTION PHENOTYPE</scope>
    <source>
        <strain>MO10 / Serotype O139</strain>
    </source>
</reference>
<protein>
    <recommendedName>
        <fullName>Norspermidine sensor</fullName>
    </recommendedName>
    <alternativeName>
        <fullName>Norspermidine-binding protein</fullName>
    </alternativeName>
</protein>
<gene>
    <name type="primary">nspS</name>
    <name type="ordered locus">VC_0704</name>
</gene>
<name>NSPS_VIBCH</name>
<keyword id="KW-0574">Periplasm</keyword>
<keyword id="KW-1185">Reference proteome</keyword>
<keyword id="KW-0732">Signal</keyword>
<keyword id="KW-0813">Transport</keyword>
<organism>
    <name type="scientific">Vibrio cholerae serotype O1 (strain ATCC 39315 / El Tor Inaba N16961)</name>
    <dbReference type="NCBI Taxonomy" id="243277"/>
    <lineage>
        <taxon>Bacteria</taxon>
        <taxon>Pseudomonadati</taxon>
        <taxon>Pseudomonadota</taxon>
        <taxon>Gammaproteobacteria</taxon>
        <taxon>Vibrionales</taxon>
        <taxon>Vibrionaceae</taxon>
        <taxon>Vibrio</taxon>
    </lineage>
</organism>
<sequence length="359" mass="40899">MTNFCNEWVSYSQMIKRFLSLMVLNTVCYQASALELNVYLWEDTIAPSVVEAWHKKTGVSVNLFHFDNDDERSLLMLKSVQLPFDIMVLDNVSAFIFSRQNVFEDLTALPNRANNDPMWLQACGTHAVPYFWGSVGIAYRKSLFDKPPTQWSEVVDIAPAHRGRVGMLKDSVETLLPALYMLNASPITDSIDTLRQAYRLLDAANPHILTYEYVLSYVRSHPQTDNLHMAVSYSGDHYSLNRFFNTQDWDFSVPEGRPYLWVDCMAVNSVSPNTVQAKAFLDFLMKPDIAAINAEYIRAASPNYKARALLPVEHREDLSIYLPEQRLAEGIIDSELSAKNLSLRAKIISSVTYQYEAKP</sequence>
<accession>Q9KU25</accession>
<proteinExistence type="inferred from homology"/>
<feature type="signal peptide" evidence="1">
    <location>
        <begin position="1"/>
        <end position="33"/>
    </location>
</feature>
<feature type="chain" id="PRO_0000042813" description="Norspermidine sensor">
    <location>
        <begin position="34"/>
        <end position="359"/>
    </location>
</feature>
<evidence type="ECO:0000255" key="1"/>
<evidence type="ECO:0000269" key="2">
    <source>
    </source>
</evidence>
<evidence type="ECO:0000305" key="3"/>
<dbReference type="EMBL" id="AE003852">
    <property type="protein sequence ID" value="AAF93869.1"/>
    <property type="molecule type" value="Genomic_DNA"/>
</dbReference>
<dbReference type="PIR" id="B82291">
    <property type="entry name" value="B82291"/>
</dbReference>
<dbReference type="RefSeq" id="NP_230353.1">
    <property type="nucleotide sequence ID" value="NC_002505.1"/>
</dbReference>
<dbReference type="SMR" id="Q9KU25"/>
<dbReference type="STRING" id="243277.VC_0704"/>
<dbReference type="DNASU" id="2615708"/>
<dbReference type="EnsemblBacteria" id="AAF93869">
    <property type="protein sequence ID" value="AAF93869"/>
    <property type="gene ID" value="VC_0704"/>
</dbReference>
<dbReference type="KEGG" id="vch:VC_0704"/>
<dbReference type="PATRIC" id="fig|243277.26.peg.674"/>
<dbReference type="eggNOG" id="COG0687">
    <property type="taxonomic scope" value="Bacteria"/>
</dbReference>
<dbReference type="HOGENOM" id="CLU_026974_1_3_6"/>
<dbReference type="Proteomes" id="UP000000584">
    <property type="component" value="Chromosome 1"/>
</dbReference>
<dbReference type="GO" id="GO:0042597">
    <property type="term" value="C:periplasmic space"/>
    <property type="evidence" value="ECO:0007669"/>
    <property type="project" value="UniProtKB-SubCell"/>
</dbReference>
<dbReference type="GO" id="GO:0019808">
    <property type="term" value="F:polyamine binding"/>
    <property type="evidence" value="ECO:0007669"/>
    <property type="project" value="InterPro"/>
</dbReference>
<dbReference type="GO" id="GO:0015846">
    <property type="term" value="P:polyamine transport"/>
    <property type="evidence" value="ECO:0007669"/>
    <property type="project" value="InterPro"/>
</dbReference>
<dbReference type="CDD" id="cd13590">
    <property type="entry name" value="PBP2_PotD_PotF_like"/>
    <property type="match status" value="1"/>
</dbReference>
<dbReference type="Gene3D" id="3.40.190.10">
    <property type="entry name" value="Periplasmic binding protein-like II"/>
    <property type="match status" value="2"/>
</dbReference>
<dbReference type="InterPro" id="IPR006059">
    <property type="entry name" value="SBP"/>
</dbReference>
<dbReference type="InterPro" id="IPR001188">
    <property type="entry name" value="Sperm_putr-bd"/>
</dbReference>
<dbReference type="PANTHER" id="PTHR30222:SF12">
    <property type="entry name" value="NORSPERMIDINE SENSOR"/>
    <property type="match status" value="1"/>
</dbReference>
<dbReference type="PANTHER" id="PTHR30222">
    <property type="entry name" value="SPERMIDINE/PUTRESCINE-BINDING PERIPLASMIC PROTEIN"/>
    <property type="match status" value="1"/>
</dbReference>
<dbReference type="Pfam" id="PF13416">
    <property type="entry name" value="SBP_bac_8"/>
    <property type="match status" value="1"/>
</dbReference>
<dbReference type="PRINTS" id="PR00909">
    <property type="entry name" value="SPERMDNBNDNG"/>
</dbReference>
<dbReference type="SUPFAM" id="SSF53850">
    <property type="entry name" value="Periplasmic binding protein-like II"/>
    <property type="match status" value="1"/>
</dbReference>
<comment type="function">
    <text evidence="2">Acts as a sensor of norspermidine and enhances biofilm formation. When complexed to norspermidine, could interact with the periplasmic portion of MbaA to regulate its enzymatic activity.</text>
</comment>
<comment type="subcellular location">
    <subcellularLocation>
        <location evidence="3">Periplasm</location>
    </subcellularLocation>
</comment>
<comment type="disruption phenotype">
    <text evidence="2">Deletion mutants form biofilms thinner than wild- type and show greatly reduced surface accumulation compared to wild-type.</text>
</comment>
<comment type="similarity">
    <text evidence="3">Belongs to the bacterial solute-binding protein PotD/PotF family.</text>
</comment>